<name>GATC_DROPE</name>
<evidence type="ECO:0000255" key="1">
    <source>
        <dbReference type="HAMAP-Rule" id="MF_03149"/>
    </source>
</evidence>
<reference key="1">
    <citation type="journal article" date="2007" name="Nature">
        <title>Evolution of genes and genomes on the Drosophila phylogeny.</title>
        <authorList>
            <consortium name="Drosophila 12 genomes consortium"/>
        </authorList>
    </citation>
    <scope>NUCLEOTIDE SEQUENCE [LARGE SCALE GENOMIC DNA]</scope>
    <source>
        <strain>MSH-3 / Tucson 14011-0111.49</strain>
    </source>
</reference>
<organism>
    <name type="scientific">Drosophila persimilis</name>
    <name type="common">Fruit fly</name>
    <dbReference type="NCBI Taxonomy" id="7234"/>
    <lineage>
        <taxon>Eukaryota</taxon>
        <taxon>Metazoa</taxon>
        <taxon>Ecdysozoa</taxon>
        <taxon>Arthropoda</taxon>
        <taxon>Hexapoda</taxon>
        <taxon>Insecta</taxon>
        <taxon>Pterygota</taxon>
        <taxon>Neoptera</taxon>
        <taxon>Endopterygota</taxon>
        <taxon>Diptera</taxon>
        <taxon>Brachycera</taxon>
        <taxon>Muscomorpha</taxon>
        <taxon>Ephydroidea</taxon>
        <taxon>Drosophilidae</taxon>
        <taxon>Drosophila</taxon>
        <taxon>Sophophora</taxon>
    </lineage>
</organism>
<sequence length="173" mass="19694">MNKNCISASWRCDERTARQVCSADDSDKMADCCKRPEDFQCPINKTAKLDFKELRYATKVPQTPVDTVFPETTANRVEIDAKTIQLLERLSLVNLDSEQALATLNSSIQFADKIAHINTENVRPLYTVLENQQLQLRNDEVKEGDCRVELLRNAKVTDEDYYVSPPGNIPLEQ</sequence>
<gene>
    <name type="ORF">GL21081</name>
</gene>
<dbReference type="EC" id="6.3.5.-" evidence="1"/>
<dbReference type="EMBL" id="CH479195">
    <property type="protein sequence ID" value="EDW27341.1"/>
    <property type="molecule type" value="Genomic_DNA"/>
</dbReference>
<dbReference type="RefSeq" id="XP_002023213.1">
    <property type="nucleotide sequence ID" value="XM_002023177.1"/>
</dbReference>
<dbReference type="SMR" id="B4GX14"/>
<dbReference type="STRING" id="7234.B4GX14"/>
<dbReference type="EnsemblMetazoa" id="FBtr0186696">
    <property type="protein sequence ID" value="FBpp0185188"/>
    <property type="gene ID" value="FBgn0158676"/>
</dbReference>
<dbReference type="eggNOG" id="KOG4247">
    <property type="taxonomic scope" value="Eukaryota"/>
</dbReference>
<dbReference type="HOGENOM" id="CLU_105899_0_1_1"/>
<dbReference type="OMA" id="RCAKRTD"/>
<dbReference type="OrthoDB" id="5394539at2759"/>
<dbReference type="PhylomeDB" id="B4GX14"/>
<dbReference type="Proteomes" id="UP000008744">
    <property type="component" value="Unassembled WGS sequence"/>
</dbReference>
<dbReference type="GO" id="GO:0030956">
    <property type="term" value="C:glutamyl-tRNA(Gln) amidotransferase complex"/>
    <property type="evidence" value="ECO:0007669"/>
    <property type="project" value="UniProtKB-UniRule"/>
</dbReference>
<dbReference type="GO" id="GO:0005739">
    <property type="term" value="C:mitochondrion"/>
    <property type="evidence" value="ECO:0007669"/>
    <property type="project" value="UniProtKB-SubCell"/>
</dbReference>
<dbReference type="GO" id="GO:0005524">
    <property type="term" value="F:ATP binding"/>
    <property type="evidence" value="ECO:0007669"/>
    <property type="project" value="UniProtKB-KW"/>
</dbReference>
<dbReference type="GO" id="GO:0050567">
    <property type="term" value="F:glutaminyl-tRNA synthase (glutamine-hydrolyzing) activity"/>
    <property type="evidence" value="ECO:0007669"/>
    <property type="project" value="UniProtKB-UniRule"/>
</dbReference>
<dbReference type="GO" id="GO:0070681">
    <property type="term" value="P:glutaminyl-tRNAGln biosynthesis via transamidation"/>
    <property type="evidence" value="ECO:0007669"/>
    <property type="project" value="UniProtKB-UniRule"/>
</dbReference>
<dbReference type="GO" id="GO:0032543">
    <property type="term" value="P:mitochondrial translation"/>
    <property type="evidence" value="ECO:0007669"/>
    <property type="project" value="UniProtKB-UniRule"/>
</dbReference>
<dbReference type="GO" id="GO:0006450">
    <property type="term" value="P:regulation of translational fidelity"/>
    <property type="evidence" value="ECO:0007669"/>
    <property type="project" value="InterPro"/>
</dbReference>
<dbReference type="HAMAP" id="MF_00122">
    <property type="entry name" value="GatC"/>
    <property type="match status" value="1"/>
</dbReference>
<dbReference type="InterPro" id="IPR036113">
    <property type="entry name" value="Asp/Glu-ADT_sf_sub_c"/>
</dbReference>
<dbReference type="InterPro" id="IPR003837">
    <property type="entry name" value="GatC"/>
</dbReference>
<dbReference type="NCBIfam" id="TIGR00135">
    <property type="entry name" value="gatC"/>
    <property type="match status" value="1"/>
</dbReference>
<dbReference type="PANTHER" id="PTHR15004">
    <property type="entry name" value="GLUTAMYL-TRNA(GLN) AMIDOTRANSFERASE SUBUNIT C, MITOCHONDRIAL"/>
    <property type="match status" value="1"/>
</dbReference>
<dbReference type="PANTHER" id="PTHR15004:SF0">
    <property type="entry name" value="GLUTAMYL-TRNA(GLN) AMIDOTRANSFERASE SUBUNIT C, MITOCHONDRIAL"/>
    <property type="match status" value="1"/>
</dbReference>
<dbReference type="Pfam" id="PF02686">
    <property type="entry name" value="GatC"/>
    <property type="match status" value="1"/>
</dbReference>
<dbReference type="SUPFAM" id="SSF141000">
    <property type="entry name" value="Glu-tRNAGln amidotransferase C subunit"/>
    <property type="match status" value="1"/>
</dbReference>
<keyword id="KW-0067">ATP-binding</keyword>
<keyword id="KW-0436">Ligase</keyword>
<keyword id="KW-0496">Mitochondrion</keyword>
<keyword id="KW-0547">Nucleotide-binding</keyword>
<keyword id="KW-0648">Protein biosynthesis</keyword>
<keyword id="KW-1185">Reference proteome</keyword>
<feature type="chain" id="PRO_0000413305" description="Glutamyl-tRNA(Gln) amidotransferase subunit C, mitochondrial">
    <location>
        <begin position="1"/>
        <end position="173"/>
    </location>
</feature>
<accession>B4GX14</accession>
<comment type="function">
    <text evidence="1">Allows the formation of correctly charged Gln-tRNA(Gln) through the transamidation of misacylated Glu-tRNA(Gln) in the mitochondria. The reaction takes place in the presence of glutamine and ATP through an activated gamma-phospho-Glu-tRNA(Gln).</text>
</comment>
<comment type="catalytic activity">
    <reaction evidence="1">
        <text>L-glutamyl-tRNA(Gln) + L-glutamine + ATP + H2O = L-glutaminyl-tRNA(Gln) + L-glutamate + ADP + phosphate + H(+)</text>
        <dbReference type="Rhea" id="RHEA:17521"/>
        <dbReference type="Rhea" id="RHEA-COMP:9681"/>
        <dbReference type="Rhea" id="RHEA-COMP:9684"/>
        <dbReference type="ChEBI" id="CHEBI:15377"/>
        <dbReference type="ChEBI" id="CHEBI:15378"/>
        <dbReference type="ChEBI" id="CHEBI:29985"/>
        <dbReference type="ChEBI" id="CHEBI:30616"/>
        <dbReference type="ChEBI" id="CHEBI:43474"/>
        <dbReference type="ChEBI" id="CHEBI:58359"/>
        <dbReference type="ChEBI" id="CHEBI:78520"/>
        <dbReference type="ChEBI" id="CHEBI:78521"/>
        <dbReference type="ChEBI" id="CHEBI:456216"/>
    </reaction>
</comment>
<comment type="subunit">
    <text evidence="1">Subunit of the heterotrimeric GatCAB amidotransferase (AdT) complex, composed of A, B and C subunits.</text>
</comment>
<comment type="subcellular location">
    <subcellularLocation>
        <location evidence="1">Mitochondrion</location>
    </subcellularLocation>
</comment>
<comment type="miscellaneous">
    <text evidence="1">This protein may be expected to contain an N-terminal transit peptide but none has been predicted.</text>
</comment>
<comment type="similarity">
    <text evidence="1">Belongs to the GatC family.</text>
</comment>
<protein>
    <recommendedName>
        <fullName evidence="1">Glutamyl-tRNA(Gln) amidotransferase subunit C, mitochondrial</fullName>
        <shortName evidence="1">Glu-AdT subunit C</shortName>
        <ecNumber evidence="1">6.3.5.-</ecNumber>
    </recommendedName>
</protein>
<proteinExistence type="inferred from homology"/>